<feature type="chain" id="PRO_1000191632" description="Malate dehydrogenase">
    <location>
        <begin position="1"/>
        <end position="328"/>
    </location>
</feature>
<feature type="active site" description="Proton acceptor" evidence="1">
    <location>
        <position position="189"/>
    </location>
</feature>
<feature type="binding site" evidence="1">
    <location>
        <begin position="11"/>
        <end position="17"/>
    </location>
    <ligand>
        <name>NAD(+)</name>
        <dbReference type="ChEBI" id="CHEBI:57540"/>
    </ligand>
</feature>
<feature type="binding site" evidence="1">
    <location>
        <position position="94"/>
    </location>
    <ligand>
        <name>substrate</name>
    </ligand>
</feature>
<feature type="binding site" evidence="1">
    <location>
        <position position="100"/>
    </location>
    <ligand>
        <name>substrate</name>
    </ligand>
</feature>
<feature type="binding site" evidence="1">
    <location>
        <position position="107"/>
    </location>
    <ligand>
        <name>NAD(+)</name>
        <dbReference type="ChEBI" id="CHEBI:57540"/>
    </ligand>
</feature>
<feature type="binding site" evidence="1">
    <location>
        <position position="114"/>
    </location>
    <ligand>
        <name>NAD(+)</name>
        <dbReference type="ChEBI" id="CHEBI:57540"/>
    </ligand>
</feature>
<feature type="binding site" evidence="1">
    <location>
        <begin position="131"/>
        <end position="133"/>
    </location>
    <ligand>
        <name>NAD(+)</name>
        <dbReference type="ChEBI" id="CHEBI:57540"/>
    </ligand>
</feature>
<feature type="binding site" evidence="1">
    <location>
        <position position="133"/>
    </location>
    <ligand>
        <name>substrate</name>
    </ligand>
</feature>
<feature type="binding site" evidence="1">
    <location>
        <position position="164"/>
    </location>
    <ligand>
        <name>substrate</name>
    </ligand>
</feature>
<keyword id="KW-0520">NAD</keyword>
<keyword id="KW-0560">Oxidoreductase</keyword>
<keyword id="KW-0816">Tricarboxylic acid cycle</keyword>
<proteinExistence type="inferred from homology"/>
<accession>B0RU49</accession>
<protein>
    <recommendedName>
        <fullName evidence="1">Malate dehydrogenase</fullName>
        <ecNumber evidence="1">1.1.1.37</ecNumber>
    </recommendedName>
</protein>
<dbReference type="EC" id="1.1.1.37" evidence="1"/>
<dbReference type="EMBL" id="AM920689">
    <property type="protein sequence ID" value="CAP52791.1"/>
    <property type="molecule type" value="Genomic_DNA"/>
</dbReference>
<dbReference type="SMR" id="B0RU49"/>
<dbReference type="KEGG" id="xca:xcc-b100_3426"/>
<dbReference type="HOGENOM" id="CLU_040727_2_0_6"/>
<dbReference type="Proteomes" id="UP000001188">
    <property type="component" value="Chromosome"/>
</dbReference>
<dbReference type="GO" id="GO:0030060">
    <property type="term" value="F:L-malate dehydrogenase (NAD+) activity"/>
    <property type="evidence" value="ECO:0007669"/>
    <property type="project" value="UniProtKB-UniRule"/>
</dbReference>
<dbReference type="GO" id="GO:0006108">
    <property type="term" value="P:malate metabolic process"/>
    <property type="evidence" value="ECO:0007669"/>
    <property type="project" value="InterPro"/>
</dbReference>
<dbReference type="GO" id="GO:0006099">
    <property type="term" value="P:tricarboxylic acid cycle"/>
    <property type="evidence" value="ECO:0007669"/>
    <property type="project" value="UniProtKB-UniRule"/>
</dbReference>
<dbReference type="CDD" id="cd01338">
    <property type="entry name" value="MDH_chloroplast-like"/>
    <property type="match status" value="1"/>
</dbReference>
<dbReference type="FunFam" id="3.40.50.720:FF:000010">
    <property type="entry name" value="Malate dehydrogenase"/>
    <property type="match status" value="1"/>
</dbReference>
<dbReference type="FunFam" id="3.90.110.10:FF:000002">
    <property type="entry name" value="Malate dehydrogenase"/>
    <property type="match status" value="1"/>
</dbReference>
<dbReference type="Gene3D" id="3.90.110.10">
    <property type="entry name" value="Lactate dehydrogenase/glycoside hydrolase, family 4, C-terminal"/>
    <property type="match status" value="1"/>
</dbReference>
<dbReference type="Gene3D" id="3.40.50.720">
    <property type="entry name" value="NAD(P)-binding Rossmann-like Domain"/>
    <property type="match status" value="1"/>
</dbReference>
<dbReference type="HAMAP" id="MF_01517">
    <property type="entry name" value="Malate_dehydrog_2"/>
    <property type="match status" value="1"/>
</dbReference>
<dbReference type="InterPro" id="IPR001557">
    <property type="entry name" value="L-lactate/malate_DH"/>
</dbReference>
<dbReference type="InterPro" id="IPR022383">
    <property type="entry name" value="Lactate/malate_DH_C"/>
</dbReference>
<dbReference type="InterPro" id="IPR001236">
    <property type="entry name" value="Lactate/malate_DH_N"/>
</dbReference>
<dbReference type="InterPro" id="IPR015955">
    <property type="entry name" value="Lactate_DH/Glyco_Ohase_4_C"/>
</dbReference>
<dbReference type="InterPro" id="IPR010945">
    <property type="entry name" value="Malate_DH_type2"/>
</dbReference>
<dbReference type="InterPro" id="IPR036291">
    <property type="entry name" value="NAD(P)-bd_dom_sf"/>
</dbReference>
<dbReference type="NCBIfam" id="TIGR01759">
    <property type="entry name" value="MalateDH-SF1"/>
    <property type="match status" value="1"/>
</dbReference>
<dbReference type="NCBIfam" id="NF003916">
    <property type="entry name" value="PRK05442.1"/>
    <property type="match status" value="1"/>
</dbReference>
<dbReference type="PANTHER" id="PTHR23382">
    <property type="entry name" value="MALATE DEHYDROGENASE"/>
    <property type="match status" value="1"/>
</dbReference>
<dbReference type="Pfam" id="PF02866">
    <property type="entry name" value="Ldh_1_C"/>
    <property type="match status" value="1"/>
</dbReference>
<dbReference type="Pfam" id="PF00056">
    <property type="entry name" value="Ldh_1_N"/>
    <property type="match status" value="1"/>
</dbReference>
<dbReference type="PIRSF" id="PIRSF000102">
    <property type="entry name" value="Lac_mal_DH"/>
    <property type="match status" value="1"/>
</dbReference>
<dbReference type="SUPFAM" id="SSF56327">
    <property type="entry name" value="LDH C-terminal domain-like"/>
    <property type="match status" value="1"/>
</dbReference>
<dbReference type="SUPFAM" id="SSF51735">
    <property type="entry name" value="NAD(P)-binding Rossmann-fold domains"/>
    <property type="match status" value="1"/>
</dbReference>
<sequence>MKAPVRVAVTGAAGQIGYALLFRIASGEMLGKDQPVILQLLELSNEKAQAALKGVMMELEDCAFPLLAGMVGTDDAEVAFKDIDVALLVGARPRGPGMERKDLLLENAKIFTAQGAALNKVAKRDVKVLVVGNPANTNAYIAMESAPDLNPKNFTAMLRLDHNRALSQLSLKLGKPVGGIEKLVVWGNHSPTMYPDYRFATSDGASIGDAINDQEWNAGTFIPTVGKRGAAIIEARGLSSAASAANAAIDHVRDWVLGSNGKWVTMGVPSDGSYGIPEGVIFGFPVTTENGQYTLVKDLPIDDFSQKYIDKTLAELEEERSGVSHLLG</sequence>
<evidence type="ECO:0000255" key="1">
    <source>
        <dbReference type="HAMAP-Rule" id="MF_01517"/>
    </source>
</evidence>
<organism>
    <name type="scientific">Xanthomonas campestris pv. campestris (strain B100)</name>
    <dbReference type="NCBI Taxonomy" id="509169"/>
    <lineage>
        <taxon>Bacteria</taxon>
        <taxon>Pseudomonadati</taxon>
        <taxon>Pseudomonadota</taxon>
        <taxon>Gammaproteobacteria</taxon>
        <taxon>Lysobacterales</taxon>
        <taxon>Lysobacteraceae</taxon>
        <taxon>Xanthomonas</taxon>
    </lineage>
</organism>
<reference key="1">
    <citation type="journal article" date="2008" name="J. Biotechnol.">
        <title>The genome of Xanthomonas campestris pv. campestris B100 and its use for the reconstruction of metabolic pathways involved in xanthan biosynthesis.</title>
        <authorList>
            <person name="Vorhoelter F.-J."/>
            <person name="Schneiker S."/>
            <person name="Goesmann A."/>
            <person name="Krause L."/>
            <person name="Bekel T."/>
            <person name="Kaiser O."/>
            <person name="Linke B."/>
            <person name="Patschkowski T."/>
            <person name="Rueckert C."/>
            <person name="Schmid J."/>
            <person name="Sidhu V.K."/>
            <person name="Sieber V."/>
            <person name="Tauch A."/>
            <person name="Watt S.A."/>
            <person name="Weisshaar B."/>
            <person name="Becker A."/>
            <person name="Niehaus K."/>
            <person name="Puehler A."/>
        </authorList>
    </citation>
    <scope>NUCLEOTIDE SEQUENCE [LARGE SCALE GENOMIC DNA]</scope>
    <source>
        <strain>B100</strain>
    </source>
</reference>
<name>MDH_XANCB</name>
<gene>
    <name evidence="1" type="primary">mdh</name>
    <name type="ordered locus">xcc-b100_3426</name>
</gene>
<comment type="function">
    <text evidence="1">Catalyzes the reversible oxidation of malate to oxaloacetate.</text>
</comment>
<comment type="catalytic activity">
    <reaction evidence="1">
        <text>(S)-malate + NAD(+) = oxaloacetate + NADH + H(+)</text>
        <dbReference type="Rhea" id="RHEA:21432"/>
        <dbReference type="ChEBI" id="CHEBI:15378"/>
        <dbReference type="ChEBI" id="CHEBI:15589"/>
        <dbReference type="ChEBI" id="CHEBI:16452"/>
        <dbReference type="ChEBI" id="CHEBI:57540"/>
        <dbReference type="ChEBI" id="CHEBI:57945"/>
        <dbReference type="EC" id="1.1.1.37"/>
    </reaction>
</comment>
<comment type="similarity">
    <text evidence="1">Belongs to the LDH/MDH superfamily. MDH type 2 family.</text>
</comment>